<name>RETST_MACFA</name>
<keyword id="KW-0256">Endoplasmic reticulum</keyword>
<keyword id="KW-0274">FAD</keyword>
<keyword id="KW-0285">Flavoprotein</keyword>
<keyword id="KW-0443">Lipid metabolism</keyword>
<keyword id="KW-0472">Membrane</keyword>
<keyword id="KW-0520">NAD</keyword>
<keyword id="KW-0521">NADP</keyword>
<keyword id="KW-0560">Oxidoreductase</keyword>
<keyword id="KW-1185">Reference proteome</keyword>
<keyword id="KW-0732">Signal</keyword>
<gene>
    <name type="primary">RETSAT</name>
    <name type="synonym">PPSIG</name>
</gene>
<comment type="function">
    <text evidence="1">Catalyzes the saturation of all-trans-retinol to all-trans-13,14-dihydroretinol. Does not exhibit any activity toward all-trans-retinoic acid, nor 9-cis, 11-cis or 13-cis-retinol isomers. May play a role in the metabolism of vitamin A. Independently of retinol conversion, may regulate liver metabolism upstream of MLXIPL/ChREBP. May play a role in adipocyte differentiation.</text>
</comment>
<comment type="catalytic activity">
    <reaction evidence="1">
        <text>all-trans-13,14-dihydroretinol + A = all-trans-retinol + AH2</text>
        <dbReference type="Rhea" id="RHEA:19193"/>
        <dbReference type="ChEBI" id="CHEBI:13193"/>
        <dbReference type="ChEBI" id="CHEBI:17336"/>
        <dbReference type="ChEBI" id="CHEBI:17499"/>
        <dbReference type="ChEBI" id="CHEBI:52075"/>
        <dbReference type="EC" id="1.3.99.23"/>
    </reaction>
</comment>
<comment type="cofactor">
    <cofactor evidence="2">
        <name>NAD(+)</name>
        <dbReference type="ChEBI" id="CHEBI:57540"/>
    </cofactor>
    <cofactor evidence="2">
        <name>NADP(+)</name>
        <dbReference type="ChEBI" id="CHEBI:58349"/>
    </cofactor>
    <cofactor evidence="2">
        <name>FAD</name>
        <dbReference type="ChEBI" id="CHEBI:57692"/>
    </cofactor>
</comment>
<comment type="subcellular location">
    <subcellularLocation>
        <location evidence="1">Endoplasmic reticulum membrane</location>
        <topology evidence="1">Peripheral membrane protein</topology>
    </subcellularLocation>
</comment>
<comment type="similarity">
    <text evidence="4">Belongs to the carotenoid/retinoid oxidoreductase family. CrtISO subfamily.</text>
</comment>
<feature type="signal peptide" evidence="3">
    <location>
        <begin position="1"/>
        <end position="18"/>
    </location>
</feature>
<feature type="chain" id="PRO_0000225666" description="All-trans-retinol 13,14-reductase">
    <location>
        <begin position="19"/>
        <end position="610"/>
    </location>
</feature>
<proteinExistence type="evidence at transcript level"/>
<accession>Q64FG0</accession>
<reference key="1">
    <citation type="journal article" date="2004" name="J. Biol. Chem.">
        <title>Identification of all-trans-retinol: all-trans-13,14-dihydroretinol saturase.</title>
        <authorList>
            <person name="Moise A.R."/>
            <person name="Kuksa V."/>
            <person name="Imanishi Y."/>
            <person name="Palczewski K."/>
        </authorList>
    </citation>
    <scope>NUCLEOTIDE SEQUENCE [MRNA]</scope>
</reference>
<sequence length="610" mass="66918">MWLPLVLFLAVLLLAVVCKVYLGLFSGKSPNPFSEDVKRPPAPLVTDKEARKKVLKQAFSASRVPEKLDVVVIGSGFGGLAAAAILAKAGKRVLVLEQHTKAGGACHTFGENGLEFDTGIHYIGRMEEGSIGRFILDQITEGQLDWVPMSSPFDIMVLEGPNGRKEYPMYSGEKAYIQGLKEKFPQEEAIIDKYIKLVKVVSNGVAHAILLKFLPLPVIQLLDRCGLLTRFSPFLHASTQSLAEVLQQLGASSELQAVLSYIFPTYGVTPRHSAFSMHALLVNHYLKGAFYPRGGSSEIAFHTIPVIQRAGGAVLTRATVQSVLLDSAGKACGVSVKKGHELVNIYCPVVVSNAGLFNTYEHLLPGNARCLPGVKQQLGMVRPGLGMMSVFICLQGTKEDLHLPSTNYYVYHDTDMDQAMERYVSMPREKAAEHIPLLFIAFPSAKDPTWEDRFPGRSSMIMLIPSAYEWFEEWQAELKGKRGSDYETYKNSFVEASMSVAMKLFPQLEGKVESVTAGSPLTNQFYLAAPRGACYGADHDLGRLHPRVMASLRAQSPIPNLYLTGQDIFTCGLVGALQGALLCSSAILKRNLYSDLKDLGSRIQAQKKKN</sequence>
<organism>
    <name type="scientific">Macaca fascicularis</name>
    <name type="common">Crab-eating macaque</name>
    <name type="synonym">Cynomolgus monkey</name>
    <dbReference type="NCBI Taxonomy" id="9541"/>
    <lineage>
        <taxon>Eukaryota</taxon>
        <taxon>Metazoa</taxon>
        <taxon>Chordata</taxon>
        <taxon>Craniata</taxon>
        <taxon>Vertebrata</taxon>
        <taxon>Euteleostomi</taxon>
        <taxon>Mammalia</taxon>
        <taxon>Eutheria</taxon>
        <taxon>Euarchontoglires</taxon>
        <taxon>Primates</taxon>
        <taxon>Haplorrhini</taxon>
        <taxon>Catarrhini</taxon>
        <taxon>Cercopithecidae</taxon>
        <taxon>Cercopithecinae</taxon>
        <taxon>Macaca</taxon>
    </lineage>
</organism>
<dbReference type="EC" id="1.3.99.23" evidence="1"/>
<dbReference type="EMBL" id="AY707524">
    <property type="protein sequence ID" value="AAU34019.1"/>
    <property type="molecule type" value="mRNA"/>
</dbReference>
<dbReference type="SMR" id="Q64FG0"/>
<dbReference type="STRING" id="9541.ENSMFAP00000003799"/>
<dbReference type="eggNOG" id="KOG4254">
    <property type="taxonomic scope" value="Eukaryota"/>
</dbReference>
<dbReference type="Proteomes" id="UP000233100">
    <property type="component" value="Unplaced"/>
</dbReference>
<dbReference type="GO" id="GO:0005789">
    <property type="term" value="C:endoplasmic reticulum membrane"/>
    <property type="evidence" value="ECO:0000250"/>
    <property type="project" value="HGNC-UCL"/>
</dbReference>
<dbReference type="GO" id="GO:0031965">
    <property type="term" value="C:nuclear membrane"/>
    <property type="evidence" value="ECO:0000250"/>
    <property type="project" value="HGNC-UCL"/>
</dbReference>
<dbReference type="GO" id="GO:0005640">
    <property type="term" value="C:nuclear outer membrane"/>
    <property type="evidence" value="ECO:0000250"/>
    <property type="project" value="HGNC-UCL"/>
</dbReference>
<dbReference type="GO" id="GO:0051786">
    <property type="term" value="F:all-trans-retinol 13,14-reductase activity"/>
    <property type="evidence" value="ECO:0000250"/>
    <property type="project" value="HGNC-UCL"/>
</dbReference>
<dbReference type="GO" id="GO:0042572">
    <property type="term" value="P:retinol metabolic process"/>
    <property type="evidence" value="ECO:0000250"/>
    <property type="project" value="HGNC-UCL"/>
</dbReference>
<dbReference type="FunFam" id="3.50.50.60:FF:000139">
    <property type="entry name" value="All-trans-retinol 13,14-reductase"/>
    <property type="match status" value="1"/>
</dbReference>
<dbReference type="FunFam" id="3.50.50.60:FF:000178">
    <property type="entry name" value="All-trans-retinol 13,14-reductase"/>
    <property type="match status" value="1"/>
</dbReference>
<dbReference type="Gene3D" id="3.50.50.60">
    <property type="entry name" value="FAD/NAD(P)-binding domain"/>
    <property type="match status" value="2"/>
</dbReference>
<dbReference type="InterPro" id="IPR036188">
    <property type="entry name" value="FAD/NAD-bd_sf"/>
</dbReference>
<dbReference type="InterPro" id="IPR052206">
    <property type="entry name" value="Retinol_saturase"/>
</dbReference>
<dbReference type="PANTHER" id="PTHR46091:SF1">
    <property type="entry name" value="ALL-TRANS-RETINOL 13,14-REDUCTASE"/>
    <property type="match status" value="1"/>
</dbReference>
<dbReference type="PANTHER" id="PTHR46091">
    <property type="entry name" value="BLR7054 PROTEIN"/>
    <property type="match status" value="1"/>
</dbReference>
<dbReference type="Pfam" id="PF13450">
    <property type="entry name" value="NAD_binding_8"/>
    <property type="match status" value="1"/>
</dbReference>
<dbReference type="SUPFAM" id="SSF51905">
    <property type="entry name" value="FAD/NAD(P)-binding domain"/>
    <property type="match status" value="1"/>
</dbReference>
<evidence type="ECO:0000250" key="1">
    <source>
        <dbReference type="UniProtKB" id="Q64FW2"/>
    </source>
</evidence>
<evidence type="ECO:0000250" key="2">
    <source>
        <dbReference type="UniProtKB" id="Q8S4R4"/>
    </source>
</evidence>
<evidence type="ECO:0000255" key="3"/>
<evidence type="ECO:0000305" key="4"/>
<protein>
    <recommendedName>
        <fullName>All-trans-retinol 13,14-reductase</fullName>
        <ecNumber evidence="1">1.3.99.23</ecNumber>
    </recommendedName>
    <alternativeName>
        <fullName>All-trans-13,14-dihydroretinol saturase</fullName>
        <shortName>RetSat</shortName>
    </alternativeName>
    <alternativeName>
        <fullName>PPAR-alpha-regulated and starvation-induced gene protein</fullName>
    </alternativeName>
</protein>